<dbReference type="EMBL" id="L28429">
    <property type="status" value="NOT_ANNOTATED_CDS"/>
    <property type="molecule type" value="Genomic_DNA"/>
</dbReference>
<dbReference type="EMBL" id="AF003590">
    <property type="protein sequence ID" value="AAB61740.1"/>
    <property type="molecule type" value="Genomic_DNA"/>
</dbReference>
<dbReference type="EMBL" id="U00096">
    <property type="protein sequence ID" value="AAC74631.1"/>
    <property type="molecule type" value="Genomic_DNA"/>
</dbReference>
<dbReference type="EMBL" id="AP009048">
    <property type="protein sequence ID" value="BAA15257.1"/>
    <property type="molecule type" value="Genomic_DNA"/>
</dbReference>
<dbReference type="PIR" id="A64911">
    <property type="entry name" value="A64911"/>
</dbReference>
<dbReference type="RefSeq" id="NP_416076.1">
    <property type="nucleotide sequence ID" value="NC_000913.3"/>
</dbReference>
<dbReference type="RefSeq" id="WP_000087756.1">
    <property type="nucleotide sequence ID" value="NZ_SSUV01000001.1"/>
</dbReference>
<dbReference type="SMR" id="P0A976"/>
<dbReference type="BioGRID" id="4260241">
    <property type="interactions" value="108"/>
</dbReference>
<dbReference type="FunCoup" id="P0A976">
    <property type="interactions" value="1"/>
</dbReference>
<dbReference type="STRING" id="511145.b1558"/>
<dbReference type="PaxDb" id="511145-b1558"/>
<dbReference type="EnsemblBacteria" id="AAC74631">
    <property type="protein sequence ID" value="AAC74631"/>
    <property type="gene ID" value="b1558"/>
</dbReference>
<dbReference type="GeneID" id="75058981"/>
<dbReference type="GeneID" id="946090"/>
<dbReference type="KEGG" id="ecj:JW1550"/>
<dbReference type="KEGG" id="eco:b1558"/>
<dbReference type="KEGG" id="ecoc:C3026_08990"/>
<dbReference type="PATRIC" id="fig|1411691.4.peg.705"/>
<dbReference type="EchoBASE" id="EB2121"/>
<dbReference type="eggNOG" id="COG1278">
    <property type="taxonomic scope" value="Bacteria"/>
</dbReference>
<dbReference type="HOGENOM" id="CLU_117621_2_1_6"/>
<dbReference type="InParanoid" id="P0A976"/>
<dbReference type="OMA" id="FQKMTGI"/>
<dbReference type="OrthoDB" id="6590265at2"/>
<dbReference type="PhylomeDB" id="P0A976"/>
<dbReference type="BioCyc" id="EcoCyc:EG12205-MONOMER"/>
<dbReference type="PRO" id="PR:P0A976"/>
<dbReference type="Proteomes" id="UP000000625">
    <property type="component" value="Chromosome"/>
</dbReference>
<dbReference type="GO" id="GO:0005829">
    <property type="term" value="C:cytosol"/>
    <property type="evidence" value="ECO:0007669"/>
    <property type="project" value="UniProtKB-ARBA"/>
</dbReference>
<dbReference type="GO" id="GO:0003677">
    <property type="term" value="F:DNA binding"/>
    <property type="evidence" value="ECO:0007669"/>
    <property type="project" value="UniProtKB-KW"/>
</dbReference>
<dbReference type="GO" id="GO:0003676">
    <property type="term" value="F:nucleic acid binding"/>
    <property type="evidence" value="ECO:0000318"/>
    <property type="project" value="GO_Central"/>
</dbReference>
<dbReference type="GO" id="GO:0010468">
    <property type="term" value="P:regulation of gene expression"/>
    <property type="evidence" value="ECO:0000318"/>
    <property type="project" value="GO_Central"/>
</dbReference>
<dbReference type="Gene3D" id="2.40.50.140">
    <property type="entry name" value="Nucleic acid-binding proteins"/>
    <property type="match status" value="1"/>
</dbReference>
<dbReference type="InterPro" id="IPR012156">
    <property type="entry name" value="Cold_shock_CspA"/>
</dbReference>
<dbReference type="InterPro" id="IPR011129">
    <property type="entry name" value="CSD"/>
</dbReference>
<dbReference type="InterPro" id="IPR019844">
    <property type="entry name" value="CSD_CS"/>
</dbReference>
<dbReference type="InterPro" id="IPR002059">
    <property type="entry name" value="CSP_DNA-bd"/>
</dbReference>
<dbReference type="InterPro" id="IPR012340">
    <property type="entry name" value="NA-bd_OB-fold"/>
</dbReference>
<dbReference type="NCBIfam" id="NF012007">
    <property type="entry name" value="PRK15463.1"/>
    <property type="match status" value="1"/>
</dbReference>
<dbReference type="Pfam" id="PF00313">
    <property type="entry name" value="CSD"/>
    <property type="match status" value="1"/>
</dbReference>
<dbReference type="PIRSF" id="PIRSF002599">
    <property type="entry name" value="Cold_shock_A"/>
    <property type="match status" value="1"/>
</dbReference>
<dbReference type="SMART" id="SM00357">
    <property type="entry name" value="CSP"/>
    <property type="match status" value="1"/>
</dbReference>
<dbReference type="SUPFAM" id="SSF50249">
    <property type="entry name" value="Nucleic acid-binding proteins"/>
    <property type="match status" value="1"/>
</dbReference>
<dbReference type="PROSITE" id="PS00352">
    <property type="entry name" value="CSD_1"/>
    <property type="match status" value="1"/>
</dbReference>
<dbReference type="PROSITE" id="PS51857">
    <property type="entry name" value="CSD_2"/>
    <property type="match status" value="1"/>
</dbReference>
<comment type="subcellular location">
    <subcellularLocation>
        <location evidence="1">Cytoplasm</location>
    </subcellularLocation>
</comment>
<sequence length="70" mass="7563">MSRKMTGIVKTFDGKSGKGLITPSDGRIDVQLHVSALNLRDAEEITTGLRVEFCRINGLRGPSAANVYLS</sequence>
<gene>
    <name type="primary">cspF</name>
    <name type="ordered locus">b1558</name>
    <name type="ordered locus">JW1550</name>
</gene>
<keyword id="KW-0010">Activator</keyword>
<keyword id="KW-0963">Cytoplasm</keyword>
<keyword id="KW-0238">DNA-binding</keyword>
<keyword id="KW-1185">Reference proteome</keyword>
<keyword id="KW-0804">Transcription</keyword>
<keyword id="KW-0805">Transcription regulation</keyword>
<reference key="1">
    <citation type="journal article" date="1994" name="Mol. Microbiol.">
        <title>Family of the major cold-shock protein, CspA (CS7.4), of Escherichia coli, whose members show a high sequence similarity with the eukaryotic Y-box binding proteins.</title>
        <authorList>
            <person name="Lee S.J."/>
            <person name="Xie A."/>
            <person name="Jiang W."/>
            <person name="Etchegaray J.-P."/>
            <person name="Jones P.G."/>
            <person name="Inouye M."/>
        </authorList>
    </citation>
    <scope>NUCLEOTIDE SEQUENCE [GENOMIC DNA]</scope>
    <source>
        <strain>TAP90 / ATCC 47037</strain>
    </source>
</reference>
<reference key="2">
    <citation type="journal article" date="1997" name="J. Ind. Microbiol. Biotechnol.">
        <title>Detection and speciation of bacteria through PCR using universal major cold-shock protein primer oligomers.</title>
        <authorList>
            <person name="Francis K.P."/>
            <person name="Stewart G.S.A.B."/>
        </authorList>
    </citation>
    <scope>NUCLEOTIDE SEQUENCE [GENOMIC DNA]</scope>
    <source>
        <strain>K12 / W3110 / ATCC 27325 / DSM 5911</strain>
    </source>
</reference>
<reference key="3">
    <citation type="journal article" date="1996" name="DNA Res.">
        <title>A 570-kb DNA sequence of the Escherichia coli K-12 genome corresponding to the 28.0-40.1 min region on the linkage map.</title>
        <authorList>
            <person name="Aiba H."/>
            <person name="Baba T."/>
            <person name="Fujita K."/>
            <person name="Hayashi K."/>
            <person name="Inada T."/>
            <person name="Isono K."/>
            <person name="Itoh T."/>
            <person name="Kasai H."/>
            <person name="Kashimoto K."/>
            <person name="Kimura S."/>
            <person name="Kitakawa M."/>
            <person name="Kitagawa M."/>
            <person name="Makino K."/>
            <person name="Miki T."/>
            <person name="Mizobuchi K."/>
            <person name="Mori H."/>
            <person name="Mori T."/>
            <person name="Motomura K."/>
            <person name="Nakade S."/>
            <person name="Nakamura Y."/>
            <person name="Nashimoto H."/>
            <person name="Nishio Y."/>
            <person name="Oshima T."/>
            <person name="Saito N."/>
            <person name="Sampei G."/>
            <person name="Seki Y."/>
            <person name="Sivasundaram S."/>
            <person name="Tagami H."/>
            <person name="Takeda J."/>
            <person name="Takemoto K."/>
            <person name="Takeuchi Y."/>
            <person name="Wada C."/>
            <person name="Yamamoto Y."/>
            <person name="Horiuchi T."/>
        </authorList>
    </citation>
    <scope>NUCLEOTIDE SEQUENCE [LARGE SCALE GENOMIC DNA]</scope>
    <source>
        <strain>K12 / W3110 / ATCC 27325 / DSM 5911</strain>
    </source>
</reference>
<reference key="4">
    <citation type="journal article" date="1997" name="Science">
        <title>The complete genome sequence of Escherichia coli K-12.</title>
        <authorList>
            <person name="Blattner F.R."/>
            <person name="Plunkett G. III"/>
            <person name="Bloch C.A."/>
            <person name="Perna N.T."/>
            <person name="Burland V."/>
            <person name="Riley M."/>
            <person name="Collado-Vides J."/>
            <person name="Glasner J.D."/>
            <person name="Rode C.K."/>
            <person name="Mayhew G.F."/>
            <person name="Gregor J."/>
            <person name="Davis N.W."/>
            <person name="Kirkpatrick H.A."/>
            <person name="Goeden M.A."/>
            <person name="Rose D.J."/>
            <person name="Mau B."/>
            <person name="Shao Y."/>
        </authorList>
    </citation>
    <scope>NUCLEOTIDE SEQUENCE [LARGE SCALE GENOMIC DNA]</scope>
    <source>
        <strain>K12 / MG1655 / ATCC 47076</strain>
    </source>
</reference>
<reference key="5">
    <citation type="journal article" date="2006" name="Mol. Syst. Biol.">
        <title>Highly accurate genome sequences of Escherichia coli K-12 strains MG1655 and W3110.</title>
        <authorList>
            <person name="Hayashi K."/>
            <person name="Morooka N."/>
            <person name="Yamamoto Y."/>
            <person name="Fujita K."/>
            <person name="Isono K."/>
            <person name="Choi S."/>
            <person name="Ohtsubo E."/>
            <person name="Baba T."/>
            <person name="Wanner B.L."/>
            <person name="Mori H."/>
            <person name="Horiuchi T."/>
        </authorList>
    </citation>
    <scope>NUCLEOTIDE SEQUENCE [LARGE SCALE GENOMIC DNA]</scope>
    <source>
        <strain>K12 / W3110 / ATCC 27325 / DSM 5911</strain>
    </source>
</reference>
<reference key="6">
    <citation type="unpublished observations" date="1994-11">
        <authorList>
            <person name="Rudd K.E."/>
        </authorList>
    </citation>
    <scope>IDENTIFICATION</scope>
</reference>
<evidence type="ECO:0000250" key="1"/>
<feature type="chain" id="PRO_0000100260" description="Cold shock-like protein CspF">
    <location>
        <begin position="1"/>
        <end position="70"/>
    </location>
</feature>
<feature type="domain" description="CSD">
    <location>
        <begin position="7"/>
        <end position="67"/>
    </location>
</feature>
<name>CSPF_ECOLI</name>
<proteinExistence type="inferred from homology"/>
<organism>
    <name type="scientific">Escherichia coli (strain K12)</name>
    <dbReference type="NCBI Taxonomy" id="83333"/>
    <lineage>
        <taxon>Bacteria</taxon>
        <taxon>Pseudomonadati</taxon>
        <taxon>Pseudomonadota</taxon>
        <taxon>Gammaproteobacteria</taxon>
        <taxon>Enterobacterales</taxon>
        <taxon>Enterobacteriaceae</taxon>
        <taxon>Escherichia</taxon>
    </lineage>
</organism>
<accession>P0A976</accession>
<accession>P39819</accession>
<protein>
    <recommendedName>
        <fullName>Cold shock-like protein CspF</fullName>
        <shortName>CSP-F</shortName>
    </recommendedName>
</protein>